<sequence length="510" mass="55236">MDIRAAEISAILKDQIKNFGQEAEVTEVGQVLSVGDGIARVYGLDNVQAGEMVEFENGTRGMALNLETDNVGIVIFGADREIKEGQTVKRTRSIVDTPVGKGLLGRVVDALGNPIDGKGPIVATERKRVDVKAPGIIPRKSVHEPMATGLKSIDALIPIGRGQRELIIGDRQTGKTAIALDTILNQKPLNVEGAPEGQKLYCVYVAIGQKRSTVAQFVKVLEEQGALEYSIVVAATASDPAPMQYIAPFTGCTMGEYFRDNGMHAVIIYDDLSKQAVAYRQMSLLLRRPPGREAYPGDVFYLHSRLLERAAKLNDDEGNGSLTALPVIETQANDVSAYIPTNVISITDGQIFLETDLFFQGIRPAVNVGLSVSRVGSSAQTKAMKKVAGKIKGELAQYREMAAFAQFGSDLDASTQRLLNRGSRLTELLKQPQFSPLKMEEQVVVIYAGVNGYLDPLPVAKVRAFEDGLLSLLRGKNVEILNAIRDSRDLSDDTAGKLKAVVEAYAKTFA</sequence>
<name>ATPA_RHOP5</name>
<reference key="1">
    <citation type="submission" date="2006-09" db="EMBL/GenBank/DDBJ databases">
        <title>Complete sequence of Rhodopseudomonas palustris BisA53.</title>
        <authorList>
            <consortium name="US DOE Joint Genome Institute"/>
            <person name="Copeland A."/>
            <person name="Lucas S."/>
            <person name="Lapidus A."/>
            <person name="Barry K."/>
            <person name="Detter J.C."/>
            <person name="Glavina del Rio T."/>
            <person name="Hammon N."/>
            <person name="Israni S."/>
            <person name="Dalin E."/>
            <person name="Tice H."/>
            <person name="Pitluck S."/>
            <person name="Chain P."/>
            <person name="Malfatti S."/>
            <person name="Shin M."/>
            <person name="Vergez L."/>
            <person name="Schmutz J."/>
            <person name="Larimer F."/>
            <person name="Land M."/>
            <person name="Hauser L."/>
            <person name="Pelletier D.A."/>
            <person name="Kyrpides N."/>
            <person name="Kim E."/>
            <person name="Harwood C.S."/>
            <person name="Oda Y."/>
            <person name="Richardson P."/>
        </authorList>
    </citation>
    <scope>NUCLEOTIDE SEQUENCE [LARGE SCALE GENOMIC DNA]</scope>
    <source>
        <strain>BisA53</strain>
    </source>
</reference>
<gene>
    <name evidence="2" type="primary">atpA</name>
    <name type="ordered locus">RPE_0282</name>
</gene>
<comment type="function">
    <text evidence="2">Produces ATP from ADP in the presence of a proton gradient across the membrane. The alpha chain is a regulatory subunit.</text>
</comment>
<comment type="catalytic activity">
    <reaction evidence="2">
        <text>ATP + H2O + 4 H(+)(in) = ADP + phosphate + 5 H(+)(out)</text>
        <dbReference type="Rhea" id="RHEA:57720"/>
        <dbReference type="ChEBI" id="CHEBI:15377"/>
        <dbReference type="ChEBI" id="CHEBI:15378"/>
        <dbReference type="ChEBI" id="CHEBI:30616"/>
        <dbReference type="ChEBI" id="CHEBI:43474"/>
        <dbReference type="ChEBI" id="CHEBI:456216"/>
        <dbReference type="EC" id="7.1.2.2"/>
    </reaction>
</comment>
<comment type="subunit">
    <text evidence="1">F-type ATPases have 2 components, CF(1) - the catalytic core - and CF(0) - the membrane proton channel. CF(1) has five subunits: alpha(3), beta(3), gamma(1), delta(1), epsilon(1). CF(0) has four main subunits: a(1), b(1), b'(1) and c(9-12) (By similarity).</text>
</comment>
<comment type="subcellular location">
    <subcellularLocation>
        <location evidence="2">Cell inner membrane</location>
        <topology evidence="2">Peripheral membrane protein</topology>
    </subcellularLocation>
</comment>
<comment type="similarity">
    <text evidence="2">Belongs to the ATPase alpha/beta chains family.</text>
</comment>
<evidence type="ECO:0000250" key="1"/>
<evidence type="ECO:0000255" key="2">
    <source>
        <dbReference type="HAMAP-Rule" id="MF_01346"/>
    </source>
</evidence>
<accession>Q07UZ3</accession>
<protein>
    <recommendedName>
        <fullName evidence="2">ATP synthase subunit alpha</fullName>
        <ecNumber evidence="2">7.1.2.2</ecNumber>
    </recommendedName>
    <alternativeName>
        <fullName evidence="2">ATP synthase F1 sector subunit alpha</fullName>
    </alternativeName>
    <alternativeName>
        <fullName evidence="2">F-ATPase subunit alpha</fullName>
    </alternativeName>
</protein>
<keyword id="KW-0066">ATP synthesis</keyword>
<keyword id="KW-0067">ATP-binding</keyword>
<keyword id="KW-0997">Cell inner membrane</keyword>
<keyword id="KW-1003">Cell membrane</keyword>
<keyword id="KW-0139">CF(1)</keyword>
<keyword id="KW-0375">Hydrogen ion transport</keyword>
<keyword id="KW-0406">Ion transport</keyword>
<keyword id="KW-0472">Membrane</keyword>
<keyword id="KW-0547">Nucleotide-binding</keyword>
<keyword id="KW-1278">Translocase</keyword>
<keyword id="KW-0813">Transport</keyword>
<organism>
    <name type="scientific">Rhodopseudomonas palustris (strain BisA53)</name>
    <dbReference type="NCBI Taxonomy" id="316055"/>
    <lineage>
        <taxon>Bacteria</taxon>
        <taxon>Pseudomonadati</taxon>
        <taxon>Pseudomonadota</taxon>
        <taxon>Alphaproteobacteria</taxon>
        <taxon>Hyphomicrobiales</taxon>
        <taxon>Nitrobacteraceae</taxon>
        <taxon>Rhodopseudomonas</taxon>
    </lineage>
</organism>
<proteinExistence type="inferred from homology"/>
<dbReference type="EC" id="7.1.2.2" evidence="2"/>
<dbReference type="EMBL" id="CP000463">
    <property type="protein sequence ID" value="ABJ04241.1"/>
    <property type="molecule type" value="Genomic_DNA"/>
</dbReference>
<dbReference type="SMR" id="Q07UZ3"/>
<dbReference type="STRING" id="316055.RPE_0282"/>
<dbReference type="KEGG" id="rpe:RPE_0282"/>
<dbReference type="eggNOG" id="COG0056">
    <property type="taxonomic scope" value="Bacteria"/>
</dbReference>
<dbReference type="HOGENOM" id="CLU_010091_2_1_5"/>
<dbReference type="OrthoDB" id="9803053at2"/>
<dbReference type="GO" id="GO:0005886">
    <property type="term" value="C:plasma membrane"/>
    <property type="evidence" value="ECO:0007669"/>
    <property type="project" value="UniProtKB-SubCell"/>
</dbReference>
<dbReference type="GO" id="GO:0045259">
    <property type="term" value="C:proton-transporting ATP synthase complex"/>
    <property type="evidence" value="ECO:0007669"/>
    <property type="project" value="UniProtKB-KW"/>
</dbReference>
<dbReference type="GO" id="GO:0043531">
    <property type="term" value="F:ADP binding"/>
    <property type="evidence" value="ECO:0007669"/>
    <property type="project" value="TreeGrafter"/>
</dbReference>
<dbReference type="GO" id="GO:0005524">
    <property type="term" value="F:ATP binding"/>
    <property type="evidence" value="ECO:0007669"/>
    <property type="project" value="UniProtKB-UniRule"/>
</dbReference>
<dbReference type="GO" id="GO:0046933">
    <property type="term" value="F:proton-transporting ATP synthase activity, rotational mechanism"/>
    <property type="evidence" value="ECO:0007669"/>
    <property type="project" value="UniProtKB-UniRule"/>
</dbReference>
<dbReference type="CDD" id="cd18113">
    <property type="entry name" value="ATP-synt_F1_alpha_C"/>
    <property type="match status" value="1"/>
</dbReference>
<dbReference type="CDD" id="cd18116">
    <property type="entry name" value="ATP-synt_F1_alpha_N"/>
    <property type="match status" value="1"/>
</dbReference>
<dbReference type="CDD" id="cd01132">
    <property type="entry name" value="F1-ATPase_alpha_CD"/>
    <property type="match status" value="1"/>
</dbReference>
<dbReference type="FunFam" id="1.20.150.20:FF:000001">
    <property type="entry name" value="ATP synthase subunit alpha"/>
    <property type="match status" value="1"/>
</dbReference>
<dbReference type="FunFam" id="2.40.30.20:FF:000001">
    <property type="entry name" value="ATP synthase subunit alpha"/>
    <property type="match status" value="1"/>
</dbReference>
<dbReference type="FunFam" id="3.40.50.300:FF:002432">
    <property type="entry name" value="ATP synthase subunit alpha, mitochondrial"/>
    <property type="match status" value="1"/>
</dbReference>
<dbReference type="Gene3D" id="2.40.30.20">
    <property type="match status" value="1"/>
</dbReference>
<dbReference type="Gene3D" id="1.20.150.20">
    <property type="entry name" value="ATP synthase alpha/beta chain, C-terminal domain"/>
    <property type="match status" value="1"/>
</dbReference>
<dbReference type="Gene3D" id="3.40.50.300">
    <property type="entry name" value="P-loop containing nucleotide triphosphate hydrolases"/>
    <property type="match status" value="1"/>
</dbReference>
<dbReference type="HAMAP" id="MF_01346">
    <property type="entry name" value="ATP_synth_alpha_bact"/>
    <property type="match status" value="1"/>
</dbReference>
<dbReference type="InterPro" id="IPR023366">
    <property type="entry name" value="ATP_synth_asu-like_sf"/>
</dbReference>
<dbReference type="InterPro" id="IPR000793">
    <property type="entry name" value="ATP_synth_asu_C"/>
</dbReference>
<dbReference type="InterPro" id="IPR038376">
    <property type="entry name" value="ATP_synth_asu_C_sf"/>
</dbReference>
<dbReference type="InterPro" id="IPR033732">
    <property type="entry name" value="ATP_synth_F1_a_nt-bd_dom"/>
</dbReference>
<dbReference type="InterPro" id="IPR005294">
    <property type="entry name" value="ATP_synth_F1_asu"/>
</dbReference>
<dbReference type="InterPro" id="IPR020003">
    <property type="entry name" value="ATPase_a/bsu_AS"/>
</dbReference>
<dbReference type="InterPro" id="IPR004100">
    <property type="entry name" value="ATPase_F1/V1/A1_a/bsu_N"/>
</dbReference>
<dbReference type="InterPro" id="IPR036121">
    <property type="entry name" value="ATPase_F1/V1/A1_a/bsu_N_sf"/>
</dbReference>
<dbReference type="InterPro" id="IPR000194">
    <property type="entry name" value="ATPase_F1/V1/A1_a/bsu_nucl-bd"/>
</dbReference>
<dbReference type="InterPro" id="IPR027417">
    <property type="entry name" value="P-loop_NTPase"/>
</dbReference>
<dbReference type="NCBIfam" id="TIGR00962">
    <property type="entry name" value="atpA"/>
    <property type="match status" value="1"/>
</dbReference>
<dbReference type="NCBIfam" id="NF009884">
    <property type="entry name" value="PRK13343.1"/>
    <property type="match status" value="1"/>
</dbReference>
<dbReference type="PANTHER" id="PTHR48082">
    <property type="entry name" value="ATP SYNTHASE SUBUNIT ALPHA, MITOCHONDRIAL"/>
    <property type="match status" value="1"/>
</dbReference>
<dbReference type="PANTHER" id="PTHR48082:SF2">
    <property type="entry name" value="ATP SYNTHASE SUBUNIT ALPHA, MITOCHONDRIAL"/>
    <property type="match status" value="1"/>
</dbReference>
<dbReference type="Pfam" id="PF00006">
    <property type="entry name" value="ATP-synt_ab"/>
    <property type="match status" value="1"/>
</dbReference>
<dbReference type="Pfam" id="PF00306">
    <property type="entry name" value="ATP-synt_ab_C"/>
    <property type="match status" value="1"/>
</dbReference>
<dbReference type="Pfam" id="PF02874">
    <property type="entry name" value="ATP-synt_ab_N"/>
    <property type="match status" value="1"/>
</dbReference>
<dbReference type="PIRSF" id="PIRSF039088">
    <property type="entry name" value="F_ATPase_subunit_alpha"/>
    <property type="match status" value="1"/>
</dbReference>
<dbReference type="SUPFAM" id="SSF47917">
    <property type="entry name" value="C-terminal domain of alpha and beta subunits of F1 ATP synthase"/>
    <property type="match status" value="1"/>
</dbReference>
<dbReference type="SUPFAM" id="SSF50615">
    <property type="entry name" value="N-terminal domain of alpha and beta subunits of F1 ATP synthase"/>
    <property type="match status" value="1"/>
</dbReference>
<dbReference type="SUPFAM" id="SSF52540">
    <property type="entry name" value="P-loop containing nucleoside triphosphate hydrolases"/>
    <property type="match status" value="1"/>
</dbReference>
<dbReference type="PROSITE" id="PS00152">
    <property type="entry name" value="ATPASE_ALPHA_BETA"/>
    <property type="match status" value="1"/>
</dbReference>
<feature type="chain" id="PRO_0000302693" description="ATP synthase subunit alpha">
    <location>
        <begin position="1"/>
        <end position="510"/>
    </location>
</feature>
<feature type="binding site" evidence="2">
    <location>
        <begin position="169"/>
        <end position="176"/>
    </location>
    <ligand>
        <name>ATP</name>
        <dbReference type="ChEBI" id="CHEBI:30616"/>
    </ligand>
</feature>
<feature type="site" description="Required for activity" evidence="2">
    <location>
        <position position="371"/>
    </location>
</feature>